<reference key="1">
    <citation type="journal article" date="2008" name="J. Bacteriol.">
        <title>Complete genome sequence of Leuconostoc citreum KM20.</title>
        <authorList>
            <person name="Kim J.F."/>
            <person name="Jeong H."/>
            <person name="Lee J.-S."/>
            <person name="Choi S.-H."/>
            <person name="Ha M."/>
            <person name="Hur C.-G."/>
            <person name="Kim J.-S."/>
            <person name="Lee S."/>
            <person name="Park H.-S."/>
            <person name="Park Y.-H."/>
            <person name="Oh T.K."/>
        </authorList>
    </citation>
    <scope>NUCLEOTIDE SEQUENCE [LARGE SCALE GENOMIC DNA]</scope>
    <source>
        <strain>KM20</strain>
    </source>
</reference>
<evidence type="ECO:0000255" key="1">
    <source>
        <dbReference type="HAMAP-Rule" id="MF_01659"/>
    </source>
</evidence>
<proteinExistence type="inferred from homology"/>
<dbReference type="EC" id="2.2.1.9" evidence="1"/>
<dbReference type="EMBL" id="DQ489736">
    <property type="protein sequence ID" value="ACA82779.1"/>
    <property type="molecule type" value="Genomic_DNA"/>
</dbReference>
<dbReference type="RefSeq" id="WP_012305253.1">
    <property type="nucleotide sequence ID" value="NC_010471.1"/>
</dbReference>
<dbReference type="SMR" id="B1MZ27"/>
<dbReference type="STRING" id="349519.LCK_00952"/>
<dbReference type="KEGG" id="lci:LCK_00952"/>
<dbReference type="eggNOG" id="COG1165">
    <property type="taxonomic scope" value="Bacteria"/>
</dbReference>
<dbReference type="HOGENOM" id="CLU_006051_3_0_9"/>
<dbReference type="OrthoDB" id="9791859at2"/>
<dbReference type="UniPathway" id="UPA00079"/>
<dbReference type="UniPathway" id="UPA01057">
    <property type="reaction ID" value="UER00164"/>
</dbReference>
<dbReference type="Proteomes" id="UP000002166">
    <property type="component" value="Chromosome"/>
</dbReference>
<dbReference type="GO" id="GO:0070204">
    <property type="term" value="F:2-succinyl-5-enolpyruvyl-6-hydroxy-3-cyclohexene-1-carboxylic-acid synthase activity"/>
    <property type="evidence" value="ECO:0007669"/>
    <property type="project" value="UniProtKB-UniRule"/>
</dbReference>
<dbReference type="GO" id="GO:0000287">
    <property type="term" value="F:magnesium ion binding"/>
    <property type="evidence" value="ECO:0007669"/>
    <property type="project" value="UniProtKB-UniRule"/>
</dbReference>
<dbReference type="GO" id="GO:0030145">
    <property type="term" value="F:manganese ion binding"/>
    <property type="evidence" value="ECO:0007669"/>
    <property type="project" value="UniProtKB-UniRule"/>
</dbReference>
<dbReference type="GO" id="GO:0030976">
    <property type="term" value="F:thiamine pyrophosphate binding"/>
    <property type="evidence" value="ECO:0007669"/>
    <property type="project" value="UniProtKB-UniRule"/>
</dbReference>
<dbReference type="GO" id="GO:0009234">
    <property type="term" value="P:menaquinone biosynthetic process"/>
    <property type="evidence" value="ECO:0007669"/>
    <property type="project" value="UniProtKB-UniRule"/>
</dbReference>
<dbReference type="CDD" id="cd07037">
    <property type="entry name" value="TPP_PYR_MenD"/>
    <property type="match status" value="1"/>
</dbReference>
<dbReference type="CDD" id="cd02009">
    <property type="entry name" value="TPP_SHCHC_synthase"/>
    <property type="match status" value="1"/>
</dbReference>
<dbReference type="Gene3D" id="3.40.50.970">
    <property type="match status" value="2"/>
</dbReference>
<dbReference type="Gene3D" id="3.40.50.1220">
    <property type="entry name" value="TPP-binding domain"/>
    <property type="match status" value="1"/>
</dbReference>
<dbReference type="HAMAP" id="MF_01659">
    <property type="entry name" value="MenD"/>
    <property type="match status" value="1"/>
</dbReference>
<dbReference type="InterPro" id="IPR004433">
    <property type="entry name" value="MenaQ_synth_MenD"/>
</dbReference>
<dbReference type="InterPro" id="IPR032264">
    <property type="entry name" value="MenD_middle"/>
</dbReference>
<dbReference type="InterPro" id="IPR029061">
    <property type="entry name" value="THDP-binding"/>
</dbReference>
<dbReference type="InterPro" id="IPR012001">
    <property type="entry name" value="Thiamin_PyroP_enz_TPP-bd_dom"/>
</dbReference>
<dbReference type="InterPro" id="IPR011766">
    <property type="entry name" value="TPP_enzyme_TPP-bd"/>
</dbReference>
<dbReference type="NCBIfam" id="TIGR00173">
    <property type="entry name" value="menD"/>
    <property type="match status" value="1"/>
</dbReference>
<dbReference type="PANTHER" id="PTHR42916">
    <property type="entry name" value="2-SUCCINYL-5-ENOLPYRUVYL-6-HYDROXY-3-CYCLOHEXENE-1-CARBOXYLATE SYNTHASE"/>
    <property type="match status" value="1"/>
</dbReference>
<dbReference type="PANTHER" id="PTHR42916:SF1">
    <property type="entry name" value="PROTEIN PHYLLO, CHLOROPLASTIC"/>
    <property type="match status" value="1"/>
</dbReference>
<dbReference type="Pfam" id="PF02775">
    <property type="entry name" value="TPP_enzyme_C"/>
    <property type="match status" value="1"/>
</dbReference>
<dbReference type="Pfam" id="PF16582">
    <property type="entry name" value="TPP_enzyme_M_2"/>
    <property type="match status" value="1"/>
</dbReference>
<dbReference type="Pfam" id="PF02776">
    <property type="entry name" value="TPP_enzyme_N"/>
    <property type="match status" value="1"/>
</dbReference>
<dbReference type="PIRSF" id="PIRSF004983">
    <property type="entry name" value="MenD"/>
    <property type="match status" value="1"/>
</dbReference>
<dbReference type="SUPFAM" id="SSF52518">
    <property type="entry name" value="Thiamin diphosphate-binding fold (THDP-binding)"/>
    <property type="match status" value="2"/>
</dbReference>
<comment type="function">
    <text evidence="1">Catalyzes the thiamine diphosphate-dependent decarboxylation of 2-oxoglutarate and the subsequent addition of the resulting succinic semialdehyde-thiamine pyrophosphate anion to isochorismate to yield 2-succinyl-5-enolpyruvyl-6-hydroxy-3-cyclohexene-1-carboxylate (SEPHCHC).</text>
</comment>
<comment type="catalytic activity">
    <reaction evidence="1">
        <text>isochorismate + 2-oxoglutarate + H(+) = 5-enolpyruvoyl-6-hydroxy-2-succinyl-cyclohex-3-ene-1-carboxylate + CO2</text>
        <dbReference type="Rhea" id="RHEA:25593"/>
        <dbReference type="ChEBI" id="CHEBI:15378"/>
        <dbReference type="ChEBI" id="CHEBI:16526"/>
        <dbReference type="ChEBI" id="CHEBI:16810"/>
        <dbReference type="ChEBI" id="CHEBI:29780"/>
        <dbReference type="ChEBI" id="CHEBI:58818"/>
        <dbReference type="EC" id="2.2.1.9"/>
    </reaction>
</comment>
<comment type="cofactor">
    <cofactor evidence="1">
        <name>Mg(2+)</name>
        <dbReference type="ChEBI" id="CHEBI:18420"/>
    </cofactor>
    <cofactor evidence="1">
        <name>Mn(2+)</name>
        <dbReference type="ChEBI" id="CHEBI:29035"/>
    </cofactor>
</comment>
<comment type="cofactor">
    <cofactor evidence="1">
        <name>thiamine diphosphate</name>
        <dbReference type="ChEBI" id="CHEBI:58937"/>
    </cofactor>
    <text evidence="1">Binds 1 thiamine pyrophosphate per subunit.</text>
</comment>
<comment type="pathway">
    <text evidence="1">Quinol/quinone metabolism; 1,4-dihydroxy-2-naphthoate biosynthesis; 1,4-dihydroxy-2-naphthoate from chorismate: step 2/7.</text>
</comment>
<comment type="pathway">
    <text evidence="1">Quinol/quinone metabolism; menaquinone biosynthesis.</text>
</comment>
<comment type="subunit">
    <text evidence="1">Homodimer.</text>
</comment>
<comment type="similarity">
    <text evidence="1">Belongs to the TPP enzyme family. MenD subfamily.</text>
</comment>
<gene>
    <name evidence="1" type="primary">menD</name>
    <name type="ordered locus">LCK_00952</name>
</gene>
<feature type="chain" id="PRO_0000341765" description="2-succinyl-5-enolpyruvyl-6-hydroxy-3-cyclohexene-1-carboxylate synthase">
    <location>
        <begin position="1"/>
        <end position="541"/>
    </location>
</feature>
<protein>
    <recommendedName>
        <fullName evidence="1">2-succinyl-5-enolpyruvyl-6-hydroxy-3-cyclohexene-1-carboxylate synthase</fullName>
        <shortName evidence="1">SEPHCHC synthase</shortName>
        <ecNumber evidence="1">2.2.1.9</ecNumber>
    </recommendedName>
    <alternativeName>
        <fullName evidence="1">Menaquinone biosynthesis protein MenD</fullName>
    </alternativeName>
</protein>
<organism>
    <name type="scientific">Leuconostoc citreum (strain KM20)</name>
    <dbReference type="NCBI Taxonomy" id="349519"/>
    <lineage>
        <taxon>Bacteria</taxon>
        <taxon>Bacillati</taxon>
        <taxon>Bacillota</taxon>
        <taxon>Bacilli</taxon>
        <taxon>Lactobacillales</taxon>
        <taxon>Lactobacillaceae</taxon>
        <taxon>Leuconostoc</taxon>
    </lineage>
</organism>
<accession>B1MZ27</accession>
<name>MEND_LEUCK</name>
<keyword id="KW-0460">Magnesium</keyword>
<keyword id="KW-0464">Manganese</keyword>
<keyword id="KW-0474">Menaquinone biosynthesis</keyword>
<keyword id="KW-0479">Metal-binding</keyword>
<keyword id="KW-1185">Reference proteome</keyword>
<keyword id="KW-0786">Thiamine pyrophosphate</keyword>
<keyword id="KW-0808">Transferase</keyword>
<sequence length="541" mass="60615">MVNDTLTINTKHLLYALYASGVKHFVVSPGSRTTPIALMLAEYERQNSEIVVYIDVDERSAGFFALGIAKTRQEPVVVLGTSGTAITEYMPAVAEAKVSHIPLIVLSTDRPAELQNNGAPQTLPQHRLFGELTPYFVSFTLQDEHEDNTAYIDYMTQKLVHSAMDTGQPLQINLPLRKPLMPKLHDSHDVSITPLTFEKTHIHILPIVIKQTHVVILAGPNEAADYKDELLQFSRDHQVPVIADILSRARTTDTIFGVDSLIKAHYLTDEYRPDLVIRFGGTPVSARVLQWLQRENIPVWHVDGHAGNDHSRHVTRAFQMTPTAFLTQLALTNDMTFYQRWQQLNDIPRHAVGEASVSCMLNRILPENTAVFVANSMAIRDMDDVFSGRTTQKIYANRGVNGIDGVVSTALGMSTVSSQRSILLTGDLTLFHDMNGLMMAKKYQLNIDIIVINNNGGSIFSFLPQSQADEYFEDMFGTPLDLDMSKVAYLYDMPYIQLKGAAALGECLSHQVHGPRLIEINFDRQENVANHRELLELNQHE</sequence>